<sequence>MKFVDSASVRIEAGKGGAGCLGFRRERYISDGGPDGGDGGDGGHVYFQGQDGLNTLSEFCFKRLFRAKNGQPGSGQNKRGKSAQHLTVEIPLGTKVYDLVTDELIGEMTKHEQTILVAKGGFHGLGNTRFKSSINRAPRETTPGFPGEVREIGLELSVMADIGLLGIPNAGKSSLIRQISSARPKIADYPFTTLHPSLSVVSFCDKHIVMADIPGLIENASKGAGLGFKFLKHLSRAKVLLHVVDILPVDGSDPVKNFLTIEKELKKYDQELANKEKLLVINKIDLLPEKDRNTMVQSLLKDICYKGKVFNISALNGLGCKDLVAGLFKLVLRK</sequence>
<dbReference type="EC" id="3.6.5.-" evidence="1"/>
<dbReference type="EMBL" id="AP009247">
    <property type="protein sequence ID" value="BAF61503.1"/>
    <property type="molecule type" value="Genomic_DNA"/>
</dbReference>
<dbReference type="RefSeq" id="WP_011929773.1">
    <property type="nucleotide sequence ID" value="NC_009465.1"/>
</dbReference>
<dbReference type="SMR" id="A5CX17"/>
<dbReference type="STRING" id="412965.COSY_0381"/>
<dbReference type="KEGG" id="vok:COSY_0381"/>
<dbReference type="eggNOG" id="COG0536">
    <property type="taxonomic scope" value="Bacteria"/>
</dbReference>
<dbReference type="HOGENOM" id="CLU_011747_2_0_6"/>
<dbReference type="OrthoDB" id="9807318at2"/>
<dbReference type="Proteomes" id="UP000000247">
    <property type="component" value="Chromosome"/>
</dbReference>
<dbReference type="GO" id="GO:0005737">
    <property type="term" value="C:cytoplasm"/>
    <property type="evidence" value="ECO:0007669"/>
    <property type="project" value="UniProtKB-SubCell"/>
</dbReference>
<dbReference type="GO" id="GO:0005525">
    <property type="term" value="F:GTP binding"/>
    <property type="evidence" value="ECO:0007669"/>
    <property type="project" value="UniProtKB-UniRule"/>
</dbReference>
<dbReference type="GO" id="GO:0003924">
    <property type="term" value="F:GTPase activity"/>
    <property type="evidence" value="ECO:0007669"/>
    <property type="project" value="UniProtKB-UniRule"/>
</dbReference>
<dbReference type="GO" id="GO:0000287">
    <property type="term" value="F:magnesium ion binding"/>
    <property type="evidence" value="ECO:0007669"/>
    <property type="project" value="InterPro"/>
</dbReference>
<dbReference type="GO" id="GO:0042254">
    <property type="term" value="P:ribosome biogenesis"/>
    <property type="evidence" value="ECO:0007669"/>
    <property type="project" value="UniProtKB-UniRule"/>
</dbReference>
<dbReference type="CDD" id="cd01898">
    <property type="entry name" value="Obg"/>
    <property type="match status" value="1"/>
</dbReference>
<dbReference type="FunFam" id="2.70.210.12:FF:000001">
    <property type="entry name" value="GTPase Obg"/>
    <property type="match status" value="1"/>
</dbReference>
<dbReference type="Gene3D" id="2.70.210.12">
    <property type="entry name" value="GTP1/OBG domain"/>
    <property type="match status" value="1"/>
</dbReference>
<dbReference type="Gene3D" id="3.40.50.300">
    <property type="entry name" value="P-loop containing nucleotide triphosphate hydrolases"/>
    <property type="match status" value="1"/>
</dbReference>
<dbReference type="HAMAP" id="MF_01454">
    <property type="entry name" value="GTPase_Obg"/>
    <property type="match status" value="1"/>
</dbReference>
<dbReference type="InterPro" id="IPR031167">
    <property type="entry name" value="G_OBG"/>
</dbReference>
<dbReference type="InterPro" id="IPR006073">
    <property type="entry name" value="GTP-bd"/>
</dbReference>
<dbReference type="InterPro" id="IPR014100">
    <property type="entry name" value="GTP-bd_Obg/CgtA"/>
</dbReference>
<dbReference type="InterPro" id="IPR006074">
    <property type="entry name" value="GTP1-OBG_CS"/>
</dbReference>
<dbReference type="InterPro" id="IPR006169">
    <property type="entry name" value="GTP1_OBG_dom"/>
</dbReference>
<dbReference type="InterPro" id="IPR036726">
    <property type="entry name" value="GTP1_OBG_dom_sf"/>
</dbReference>
<dbReference type="InterPro" id="IPR045086">
    <property type="entry name" value="OBG_GTPase"/>
</dbReference>
<dbReference type="InterPro" id="IPR027417">
    <property type="entry name" value="P-loop_NTPase"/>
</dbReference>
<dbReference type="NCBIfam" id="TIGR02729">
    <property type="entry name" value="Obg_CgtA"/>
    <property type="match status" value="1"/>
</dbReference>
<dbReference type="NCBIfam" id="NF008955">
    <property type="entry name" value="PRK12297.1"/>
    <property type="match status" value="1"/>
</dbReference>
<dbReference type="NCBIfam" id="NF008956">
    <property type="entry name" value="PRK12299.1"/>
    <property type="match status" value="1"/>
</dbReference>
<dbReference type="PANTHER" id="PTHR11702">
    <property type="entry name" value="DEVELOPMENTALLY REGULATED GTP-BINDING PROTEIN-RELATED"/>
    <property type="match status" value="1"/>
</dbReference>
<dbReference type="PANTHER" id="PTHR11702:SF31">
    <property type="entry name" value="MITOCHONDRIAL RIBOSOME-ASSOCIATED GTPASE 2"/>
    <property type="match status" value="1"/>
</dbReference>
<dbReference type="Pfam" id="PF01018">
    <property type="entry name" value="GTP1_OBG"/>
    <property type="match status" value="1"/>
</dbReference>
<dbReference type="Pfam" id="PF01926">
    <property type="entry name" value="MMR_HSR1"/>
    <property type="match status" value="1"/>
</dbReference>
<dbReference type="PIRSF" id="PIRSF002401">
    <property type="entry name" value="GTP_bd_Obg/CgtA"/>
    <property type="match status" value="1"/>
</dbReference>
<dbReference type="PRINTS" id="PR00326">
    <property type="entry name" value="GTP1OBG"/>
</dbReference>
<dbReference type="SUPFAM" id="SSF82051">
    <property type="entry name" value="Obg GTP-binding protein N-terminal domain"/>
    <property type="match status" value="1"/>
</dbReference>
<dbReference type="SUPFAM" id="SSF52540">
    <property type="entry name" value="P-loop containing nucleoside triphosphate hydrolases"/>
    <property type="match status" value="1"/>
</dbReference>
<dbReference type="PROSITE" id="PS51710">
    <property type="entry name" value="G_OBG"/>
    <property type="match status" value="1"/>
</dbReference>
<dbReference type="PROSITE" id="PS00905">
    <property type="entry name" value="GTP1_OBG"/>
    <property type="match status" value="1"/>
</dbReference>
<dbReference type="PROSITE" id="PS51883">
    <property type="entry name" value="OBG"/>
    <property type="match status" value="1"/>
</dbReference>
<organism>
    <name type="scientific">Vesicomyosocius okutanii subsp. Calyptogena okutanii (strain HA)</name>
    <dbReference type="NCBI Taxonomy" id="412965"/>
    <lineage>
        <taxon>Bacteria</taxon>
        <taxon>Pseudomonadati</taxon>
        <taxon>Pseudomonadota</taxon>
        <taxon>Gammaproteobacteria</taxon>
        <taxon>Candidatus Pseudothioglobaceae</taxon>
        <taxon>Candidatus Vesicomyosocius</taxon>
    </lineage>
</organism>
<comment type="function">
    <text evidence="1">An essential GTPase which binds GTP, GDP and possibly (p)ppGpp with moderate affinity, with high nucleotide exchange rates and a fairly low GTP hydrolysis rate. Plays a role in control of the cell cycle, stress response, ribosome biogenesis and in those bacteria that undergo differentiation, in morphogenesis control.</text>
</comment>
<comment type="cofactor">
    <cofactor evidence="1">
        <name>Mg(2+)</name>
        <dbReference type="ChEBI" id="CHEBI:18420"/>
    </cofactor>
</comment>
<comment type="subunit">
    <text evidence="1">Monomer.</text>
</comment>
<comment type="subcellular location">
    <subcellularLocation>
        <location evidence="1">Cytoplasm</location>
    </subcellularLocation>
</comment>
<comment type="similarity">
    <text evidence="1">Belongs to the TRAFAC class OBG-HflX-like GTPase superfamily. OBG GTPase family.</text>
</comment>
<feature type="chain" id="PRO_0000386376" description="GTPase Obg">
    <location>
        <begin position="1"/>
        <end position="334"/>
    </location>
</feature>
<feature type="domain" description="Obg" evidence="2">
    <location>
        <begin position="1"/>
        <end position="159"/>
    </location>
</feature>
<feature type="domain" description="OBG-type G" evidence="1">
    <location>
        <begin position="160"/>
        <end position="332"/>
    </location>
</feature>
<feature type="binding site" evidence="1">
    <location>
        <begin position="166"/>
        <end position="173"/>
    </location>
    <ligand>
        <name>GTP</name>
        <dbReference type="ChEBI" id="CHEBI:37565"/>
    </ligand>
</feature>
<feature type="binding site" evidence="1">
    <location>
        <position position="173"/>
    </location>
    <ligand>
        <name>Mg(2+)</name>
        <dbReference type="ChEBI" id="CHEBI:18420"/>
    </ligand>
</feature>
<feature type="binding site" evidence="1">
    <location>
        <begin position="191"/>
        <end position="195"/>
    </location>
    <ligand>
        <name>GTP</name>
        <dbReference type="ChEBI" id="CHEBI:37565"/>
    </ligand>
</feature>
<feature type="binding site" evidence="1">
    <location>
        <position position="193"/>
    </location>
    <ligand>
        <name>Mg(2+)</name>
        <dbReference type="ChEBI" id="CHEBI:18420"/>
    </ligand>
</feature>
<feature type="binding site" evidence="1">
    <location>
        <begin position="212"/>
        <end position="215"/>
    </location>
    <ligand>
        <name>GTP</name>
        <dbReference type="ChEBI" id="CHEBI:37565"/>
    </ligand>
</feature>
<feature type="binding site" evidence="1">
    <location>
        <begin position="282"/>
        <end position="285"/>
    </location>
    <ligand>
        <name>GTP</name>
        <dbReference type="ChEBI" id="CHEBI:37565"/>
    </ligand>
</feature>
<feature type="binding site" evidence="1">
    <location>
        <begin position="313"/>
        <end position="315"/>
    </location>
    <ligand>
        <name>GTP</name>
        <dbReference type="ChEBI" id="CHEBI:37565"/>
    </ligand>
</feature>
<gene>
    <name evidence="1" type="primary">obg</name>
    <name type="ordered locus">COSY_0381</name>
</gene>
<keyword id="KW-0963">Cytoplasm</keyword>
<keyword id="KW-0342">GTP-binding</keyword>
<keyword id="KW-0378">Hydrolase</keyword>
<keyword id="KW-0460">Magnesium</keyword>
<keyword id="KW-0479">Metal-binding</keyword>
<keyword id="KW-0547">Nucleotide-binding</keyword>
<keyword id="KW-1185">Reference proteome</keyword>
<protein>
    <recommendedName>
        <fullName evidence="1">GTPase Obg</fullName>
        <ecNumber evidence="1">3.6.5.-</ecNumber>
    </recommendedName>
    <alternativeName>
        <fullName evidence="1">GTP-binding protein Obg</fullName>
    </alternativeName>
</protein>
<proteinExistence type="inferred from homology"/>
<reference key="1">
    <citation type="journal article" date="2007" name="Curr. Biol.">
        <title>Reduced genome of the thioautotrophic intracellular symbiont in a deep-sea clam, Calyptogena okutanii.</title>
        <authorList>
            <person name="Kuwahara H."/>
            <person name="Yoshida T."/>
            <person name="Takaki Y."/>
            <person name="Shimamura S."/>
            <person name="Nishi S."/>
            <person name="Harada M."/>
            <person name="Matsuyama K."/>
            <person name="Takishita K."/>
            <person name="Kawato M."/>
            <person name="Uematsu K."/>
            <person name="Fujiwara Y."/>
            <person name="Sato T."/>
            <person name="Kato C."/>
            <person name="Kitagawa M."/>
            <person name="Kato I."/>
            <person name="Maruyama T."/>
        </authorList>
    </citation>
    <scope>NUCLEOTIDE SEQUENCE [LARGE SCALE GENOMIC DNA]</scope>
    <source>
        <strain>HA</strain>
    </source>
</reference>
<accession>A5CX17</accession>
<evidence type="ECO:0000255" key="1">
    <source>
        <dbReference type="HAMAP-Rule" id="MF_01454"/>
    </source>
</evidence>
<evidence type="ECO:0000255" key="2">
    <source>
        <dbReference type="PROSITE-ProRule" id="PRU01231"/>
    </source>
</evidence>
<name>OBG_VESOH</name>